<protein>
    <recommendedName>
        <fullName evidence="1">Replication restart protein PriB</fullName>
    </recommendedName>
</protein>
<reference key="1">
    <citation type="submission" date="2007-09" db="EMBL/GenBank/DDBJ databases">
        <title>Complete sequence of chromosome of Serratia proteamaculans 568.</title>
        <authorList>
            <consortium name="US DOE Joint Genome Institute"/>
            <person name="Copeland A."/>
            <person name="Lucas S."/>
            <person name="Lapidus A."/>
            <person name="Barry K."/>
            <person name="Glavina del Rio T."/>
            <person name="Dalin E."/>
            <person name="Tice H."/>
            <person name="Pitluck S."/>
            <person name="Chain P."/>
            <person name="Malfatti S."/>
            <person name="Shin M."/>
            <person name="Vergez L."/>
            <person name="Schmutz J."/>
            <person name="Larimer F."/>
            <person name="Land M."/>
            <person name="Hauser L."/>
            <person name="Kyrpides N."/>
            <person name="Kim E."/>
            <person name="Taghavi S."/>
            <person name="Newman L."/>
            <person name="Vangronsveld J."/>
            <person name="van der Lelie D."/>
            <person name="Richardson P."/>
        </authorList>
    </citation>
    <scope>NUCLEOTIDE SEQUENCE [LARGE SCALE GENOMIC DNA]</scope>
    <source>
        <strain>568</strain>
    </source>
</reference>
<name>PRIB_SERP5</name>
<feature type="chain" id="PRO_1000083290" description="Replication restart protein PriB">
    <location>
        <begin position="1"/>
        <end position="105"/>
    </location>
</feature>
<feature type="domain" description="SSB" evidence="1">
    <location>
        <begin position="1"/>
        <end position="102"/>
    </location>
</feature>
<accession>A8G8W5</accession>
<sequence>MTANRLTLSGTVCKTPTRKVSPSGIPHCQFVLEHRSVQVEAGFTRQAWCRMPVIISGKAHQAITQSITVGTPLTVSGFISSHQGRNGLNKMVLHAEQIELIDSGD</sequence>
<dbReference type="EMBL" id="CP000826">
    <property type="protein sequence ID" value="ABV39555.1"/>
    <property type="molecule type" value="Genomic_DNA"/>
</dbReference>
<dbReference type="SMR" id="A8G8W5"/>
<dbReference type="STRING" id="399741.Spro_0447"/>
<dbReference type="KEGG" id="spe:Spro_0447"/>
<dbReference type="eggNOG" id="COG2965">
    <property type="taxonomic scope" value="Bacteria"/>
</dbReference>
<dbReference type="HOGENOM" id="CLU_166075_0_0_6"/>
<dbReference type="OrthoDB" id="9180733at2"/>
<dbReference type="GO" id="GO:1990077">
    <property type="term" value="C:primosome complex"/>
    <property type="evidence" value="ECO:0007669"/>
    <property type="project" value="UniProtKB-KW"/>
</dbReference>
<dbReference type="GO" id="GO:0003697">
    <property type="term" value="F:single-stranded DNA binding"/>
    <property type="evidence" value="ECO:0007669"/>
    <property type="project" value="UniProtKB-UniRule"/>
</dbReference>
<dbReference type="GO" id="GO:0006269">
    <property type="term" value="P:DNA replication, synthesis of primer"/>
    <property type="evidence" value="ECO:0007669"/>
    <property type="project" value="UniProtKB-KW"/>
</dbReference>
<dbReference type="Gene3D" id="2.40.50.140">
    <property type="entry name" value="Nucleic acid-binding proteins"/>
    <property type="match status" value="1"/>
</dbReference>
<dbReference type="HAMAP" id="MF_00720">
    <property type="entry name" value="PriB"/>
    <property type="match status" value="1"/>
</dbReference>
<dbReference type="InterPro" id="IPR012340">
    <property type="entry name" value="NA-bd_OB-fold"/>
</dbReference>
<dbReference type="InterPro" id="IPR000424">
    <property type="entry name" value="Primosome_PriB/ssb"/>
</dbReference>
<dbReference type="InterPro" id="IPR023646">
    <property type="entry name" value="Prisomal_replication_PriB"/>
</dbReference>
<dbReference type="NCBIfam" id="TIGR04418">
    <property type="entry name" value="PriB_gamma"/>
    <property type="match status" value="1"/>
</dbReference>
<dbReference type="Pfam" id="PF22657">
    <property type="entry name" value="SSB_1"/>
    <property type="match status" value="1"/>
</dbReference>
<dbReference type="PIRSF" id="PIRSF003135">
    <property type="entry name" value="Primosomal_n"/>
    <property type="match status" value="1"/>
</dbReference>
<dbReference type="SUPFAM" id="SSF50249">
    <property type="entry name" value="Nucleic acid-binding proteins"/>
    <property type="match status" value="1"/>
</dbReference>
<dbReference type="PROSITE" id="PS50935">
    <property type="entry name" value="SSB"/>
    <property type="match status" value="1"/>
</dbReference>
<evidence type="ECO:0000255" key="1">
    <source>
        <dbReference type="HAMAP-Rule" id="MF_00720"/>
    </source>
</evidence>
<proteinExistence type="inferred from homology"/>
<gene>
    <name evidence="1" type="primary">priB</name>
    <name type="ordered locus">Spro_0447</name>
</gene>
<organism>
    <name type="scientific">Serratia proteamaculans (strain 568)</name>
    <dbReference type="NCBI Taxonomy" id="399741"/>
    <lineage>
        <taxon>Bacteria</taxon>
        <taxon>Pseudomonadati</taxon>
        <taxon>Pseudomonadota</taxon>
        <taxon>Gammaproteobacteria</taxon>
        <taxon>Enterobacterales</taxon>
        <taxon>Yersiniaceae</taxon>
        <taxon>Serratia</taxon>
    </lineage>
</organism>
<comment type="function">
    <text evidence="1">Involved in the restart of stalled replication forks, which reloads the replicative helicase on sites other than the origin of replication; the PriA-PriB pathway is the major replication restart pathway. During primosome assembly it facilitates complex formation between PriA and DnaT on DNA; stabilizes PriA on DNA. Stimulates the DNA unwinding activity of PriA helicase.</text>
</comment>
<comment type="subunit">
    <text evidence="1">Homodimer. Interacts with PriA and DnaT. Component of the replication restart primosome. Primosome assembly occurs via a 'hand-off' mechanism. PriA binds to replication forks, subsequently PriB then DnaT bind; DnaT then displaces ssDNA to generate the helicase loading substrate.</text>
</comment>
<comment type="similarity">
    <text evidence="1">Belongs to the PriB family.</text>
</comment>
<keyword id="KW-0235">DNA replication</keyword>
<keyword id="KW-0238">DNA-binding</keyword>
<keyword id="KW-0639">Primosome</keyword>